<comment type="similarity">
    <text evidence="1">Belongs to the UPF0482 family.</text>
</comment>
<evidence type="ECO:0000255" key="1">
    <source>
        <dbReference type="HAMAP-Rule" id="MF_01581"/>
    </source>
</evidence>
<sequence length="113" mass="12943">MKITLSKRIGLLAFLLPCALALSTTVHAETNKLVIESGDSAQSRQHAAMEKEQWNDTRNLRQKVNKRTEKEWDKADAAFDNRDKCEQSANINAYWEPNTLRCLDRRTGRVITP</sequence>
<name>YNFB_ECO24</name>
<protein>
    <recommendedName>
        <fullName evidence="1">UPF0482 protein YnfB</fullName>
    </recommendedName>
</protein>
<gene>
    <name evidence="1" type="primary">ynfB</name>
    <name type="ordered locus">EcE24377A_1790</name>
</gene>
<reference key="1">
    <citation type="journal article" date="2008" name="J. Bacteriol.">
        <title>The pangenome structure of Escherichia coli: comparative genomic analysis of E. coli commensal and pathogenic isolates.</title>
        <authorList>
            <person name="Rasko D.A."/>
            <person name="Rosovitz M.J."/>
            <person name="Myers G.S.A."/>
            <person name="Mongodin E.F."/>
            <person name="Fricke W.F."/>
            <person name="Gajer P."/>
            <person name="Crabtree J."/>
            <person name="Sebaihia M."/>
            <person name="Thomson N.R."/>
            <person name="Chaudhuri R."/>
            <person name="Henderson I.R."/>
            <person name="Sperandio V."/>
            <person name="Ravel J."/>
        </authorList>
    </citation>
    <scope>NUCLEOTIDE SEQUENCE [LARGE SCALE GENOMIC DNA]</scope>
    <source>
        <strain>E24377A / ETEC</strain>
    </source>
</reference>
<organism>
    <name type="scientific">Escherichia coli O139:H28 (strain E24377A / ETEC)</name>
    <dbReference type="NCBI Taxonomy" id="331111"/>
    <lineage>
        <taxon>Bacteria</taxon>
        <taxon>Pseudomonadati</taxon>
        <taxon>Pseudomonadota</taxon>
        <taxon>Gammaproteobacteria</taxon>
        <taxon>Enterobacterales</taxon>
        <taxon>Enterobacteriaceae</taxon>
        <taxon>Escherichia</taxon>
    </lineage>
</organism>
<accession>A7ZM42</accession>
<feature type="signal peptide" evidence="1">
    <location>
        <begin position="1"/>
        <end position="28"/>
    </location>
</feature>
<feature type="chain" id="PRO_1000069277" description="UPF0482 protein YnfB">
    <location>
        <begin position="29"/>
        <end position="113"/>
    </location>
</feature>
<keyword id="KW-1185">Reference proteome</keyword>
<keyword id="KW-0732">Signal</keyword>
<proteinExistence type="inferred from homology"/>
<dbReference type="EMBL" id="CP000800">
    <property type="protein sequence ID" value="ABV18434.1"/>
    <property type="molecule type" value="Genomic_DNA"/>
</dbReference>
<dbReference type="RefSeq" id="WP_000705197.1">
    <property type="nucleotide sequence ID" value="NC_009801.1"/>
</dbReference>
<dbReference type="KEGG" id="ecw:EcE24377A_1790"/>
<dbReference type="HOGENOM" id="CLU_167574_0_0_6"/>
<dbReference type="Proteomes" id="UP000001122">
    <property type="component" value="Chromosome"/>
</dbReference>
<dbReference type="HAMAP" id="MF_01581">
    <property type="entry name" value="UPF0482"/>
    <property type="match status" value="1"/>
</dbReference>
<dbReference type="InterPro" id="IPR009700">
    <property type="entry name" value="DUF1283"/>
</dbReference>
<dbReference type="NCBIfam" id="NF010180">
    <property type="entry name" value="PRK13659.1"/>
    <property type="match status" value="1"/>
</dbReference>
<dbReference type="Pfam" id="PF06932">
    <property type="entry name" value="DUF1283"/>
    <property type="match status" value="1"/>
</dbReference>